<proteinExistence type="inferred from homology"/>
<organism>
    <name type="scientific">Bacillus thuringiensis (strain Al Hakam)</name>
    <dbReference type="NCBI Taxonomy" id="412694"/>
    <lineage>
        <taxon>Bacteria</taxon>
        <taxon>Bacillati</taxon>
        <taxon>Bacillota</taxon>
        <taxon>Bacilli</taxon>
        <taxon>Bacillales</taxon>
        <taxon>Bacillaceae</taxon>
        <taxon>Bacillus</taxon>
        <taxon>Bacillus cereus group</taxon>
    </lineage>
</organism>
<protein>
    <recommendedName>
        <fullName evidence="1">LexA repressor</fullName>
        <ecNumber evidence="1">3.4.21.88</ecNumber>
    </recommendedName>
</protein>
<gene>
    <name evidence="1" type="primary">lexA</name>
    <name type="ordered locus">BALH_3328</name>
</gene>
<sequence>MEKLTKRQQDILDFIKLKVQEKGYPPSVREIGQAVGLASSSTVHGHLSRLEEKGYIRRDPTKPRAIEILGEDRMDTETQSVIQVPIVGKVTAGLPITAVESVEEHFPLPASIVAGADQVFMLRISGDSMIEAGIFDGDLVVVRQQQSAYNGEIVVALTEDNEATVKRFYKEKDHFRLQPENSSLEPIILKQVSVIGKVIGVYRDLH</sequence>
<comment type="function">
    <text evidence="1">Represses a number of genes involved in the response to DNA damage (SOS response), including recA and lexA. In the presence of single-stranded DNA, RecA interacts with LexA causing an autocatalytic cleavage which disrupts the DNA-binding part of LexA, leading to derepression of the SOS regulon and eventually DNA repair.</text>
</comment>
<comment type="catalytic activity">
    <reaction evidence="1">
        <text>Hydrolysis of Ala-|-Gly bond in repressor LexA.</text>
        <dbReference type="EC" id="3.4.21.88"/>
    </reaction>
</comment>
<comment type="subunit">
    <text evidence="1">Homodimer.</text>
</comment>
<comment type="similarity">
    <text evidence="1">Belongs to the peptidase S24 family.</text>
</comment>
<keyword id="KW-0068">Autocatalytic cleavage</keyword>
<keyword id="KW-0227">DNA damage</keyword>
<keyword id="KW-0234">DNA repair</keyword>
<keyword id="KW-0235">DNA replication</keyword>
<keyword id="KW-0238">DNA-binding</keyword>
<keyword id="KW-0378">Hydrolase</keyword>
<keyword id="KW-0678">Repressor</keyword>
<keyword id="KW-0742">SOS response</keyword>
<keyword id="KW-0804">Transcription</keyword>
<keyword id="KW-0805">Transcription regulation</keyword>
<name>LEXA_BACAH</name>
<reference key="1">
    <citation type="journal article" date="2007" name="J. Bacteriol.">
        <title>The complete genome sequence of Bacillus thuringiensis Al Hakam.</title>
        <authorList>
            <person name="Challacombe J.F."/>
            <person name="Altherr M.R."/>
            <person name="Xie G."/>
            <person name="Bhotika S.S."/>
            <person name="Brown N."/>
            <person name="Bruce D."/>
            <person name="Campbell C.S."/>
            <person name="Campbell M.L."/>
            <person name="Chen J."/>
            <person name="Chertkov O."/>
            <person name="Cleland C."/>
            <person name="Dimitrijevic M."/>
            <person name="Doggett N.A."/>
            <person name="Fawcett J.J."/>
            <person name="Glavina T."/>
            <person name="Goodwin L.A."/>
            <person name="Green L.D."/>
            <person name="Han C.S."/>
            <person name="Hill K.K."/>
            <person name="Hitchcock P."/>
            <person name="Jackson P.J."/>
            <person name="Keim P."/>
            <person name="Kewalramani A.R."/>
            <person name="Longmire J."/>
            <person name="Lucas S."/>
            <person name="Malfatti S."/>
            <person name="Martinez D."/>
            <person name="McMurry K."/>
            <person name="Meincke L.J."/>
            <person name="Misra M."/>
            <person name="Moseman B.L."/>
            <person name="Mundt M."/>
            <person name="Munk A.C."/>
            <person name="Okinaka R.T."/>
            <person name="Parson-Quintana B."/>
            <person name="Reilly L.P."/>
            <person name="Richardson P."/>
            <person name="Robinson D.L."/>
            <person name="Saunders E."/>
            <person name="Tapia R."/>
            <person name="Tesmer J.G."/>
            <person name="Thayer N."/>
            <person name="Thompson L.S."/>
            <person name="Tice H."/>
            <person name="Ticknor L.O."/>
            <person name="Wills P.L."/>
            <person name="Gilna P."/>
            <person name="Brettin T.S."/>
        </authorList>
    </citation>
    <scope>NUCLEOTIDE SEQUENCE [LARGE SCALE GENOMIC DNA]</scope>
    <source>
        <strain>Al Hakam</strain>
    </source>
</reference>
<evidence type="ECO:0000255" key="1">
    <source>
        <dbReference type="HAMAP-Rule" id="MF_00015"/>
    </source>
</evidence>
<feature type="chain" id="PRO_1000001259" description="LexA repressor">
    <location>
        <begin position="1"/>
        <end position="206"/>
    </location>
</feature>
<feature type="DNA-binding region" description="H-T-H motif" evidence="1">
    <location>
        <begin position="28"/>
        <end position="48"/>
    </location>
</feature>
<feature type="active site" description="For autocatalytic cleavage activity" evidence="1">
    <location>
        <position position="128"/>
    </location>
</feature>
<feature type="active site" description="For autocatalytic cleavage activity" evidence="1">
    <location>
        <position position="166"/>
    </location>
</feature>
<feature type="site" description="Cleavage; by autolysis" evidence="1">
    <location>
        <begin position="92"/>
        <end position="93"/>
    </location>
</feature>
<accession>A0RH75</accession>
<dbReference type="EC" id="3.4.21.88" evidence="1"/>
<dbReference type="EMBL" id="CP000485">
    <property type="protein sequence ID" value="ABK86568.1"/>
    <property type="molecule type" value="Genomic_DNA"/>
</dbReference>
<dbReference type="RefSeq" id="WP_000413738.1">
    <property type="nucleotide sequence ID" value="NC_008600.1"/>
</dbReference>
<dbReference type="SMR" id="A0RH75"/>
<dbReference type="MEROPS" id="S24.001"/>
<dbReference type="GeneID" id="93007490"/>
<dbReference type="KEGG" id="btl:BALH_3328"/>
<dbReference type="HOGENOM" id="CLU_066192_45_1_9"/>
<dbReference type="GO" id="GO:0003677">
    <property type="term" value="F:DNA binding"/>
    <property type="evidence" value="ECO:0007669"/>
    <property type="project" value="UniProtKB-UniRule"/>
</dbReference>
<dbReference type="GO" id="GO:0004252">
    <property type="term" value="F:serine-type endopeptidase activity"/>
    <property type="evidence" value="ECO:0007669"/>
    <property type="project" value="UniProtKB-UniRule"/>
</dbReference>
<dbReference type="GO" id="GO:0006281">
    <property type="term" value="P:DNA repair"/>
    <property type="evidence" value="ECO:0007669"/>
    <property type="project" value="UniProtKB-UniRule"/>
</dbReference>
<dbReference type="GO" id="GO:0006260">
    <property type="term" value="P:DNA replication"/>
    <property type="evidence" value="ECO:0007669"/>
    <property type="project" value="UniProtKB-UniRule"/>
</dbReference>
<dbReference type="GO" id="GO:0045892">
    <property type="term" value="P:negative regulation of DNA-templated transcription"/>
    <property type="evidence" value="ECO:0007669"/>
    <property type="project" value="UniProtKB-UniRule"/>
</dbReference>
<dbReference type="GO" id="GO:0006508">
    <property type="term" value="P:proteolysis"/>
    <property type="evidence" value="ECO:0007669"/>
    <property type="project" value="InterPro"/>
</dbReference>
<dbReference type="GO" id="GO:0009432">
    <property type="term" value="P:SOS response"/>
    <property type="evidence" value="ECO:0007669"/>
    <property type="project" value="UniProtKB-UniRule"/>
</dbReference>
<dbReference type="CDD" id="cd00090">
    <property type="entry name" value="HTH_ARSR"/>
    <property type="match status" value="1"/>
</dbReference>
<dbReference type="CDD" id="cd06529">
    <property type="entry name" value="S24_LexA-like"/>
    <property type="match status" value="1"/>
</dbReference>
<dbReference type="FunFam" id="1.10.10.10:FF:000009">
    <property type="entry name" value="LexA repressor"/>
    <property type="match status" value="1"/>
</dbReference>
<dbReference type="FunFam" id="2.10.109.10:FF:000001">
    <property type="entry name" value="LexA repressor"/>
    <property type="match status" value="1"/>
</dbReference>
<dbReference type="Gene3D" id="2.10.109.10">
    <property type="entry name" value="Umud Fragment, subunit A"/>
    <property type="match status" value="1"/>
</dbReference>
<dbReference type="Gene3D" id="1.10.10.10">
    <property type="entry name" value="Winged helix-like DNA-binding domain superfamily/Winged helix DNA-binding domain"/>
    <property type="match status" value="1"/>
</dbReference>
<dbReference type="HAMAP" id="MF_00015">
    <property type="entry name" value="LexA"/>
    <property type="match status" value="1"/>
</dbReference>
<dbReference type="InterPro" id="IPR011991">
    <property type="entry name" value="ArsR-like_HTH"/>
</dbReference>
<dbReference type="InterPro" id="IPR006200">
    <property type="entry name" value="LexA"/>
</dbReference>
<dbReference type="InterPro" id="IPR039418">
    <property type="entry name" value="LexA-like"/>
</dbReference>
<dbReference type="InterPro" id="IPR036286">
    <property type="entry name" value="LexA/Signal_pep-like_sf"/>
</dbReference>
<dbReference type="InterPro" id="IPR006199">
    <property type="entry name" value="LexA_DNA-bd_dom"/>
</dbReference>
<dbReference type="InterPro" id="IPR050077">
    <property type="entry name" value="LexA_repressor"/>
</dbReference>
<dbReference type="InterPro" id="IPR006197">
    <property type="entry name" value="Peptidase_S24_LexA"/>
</dbReference>
<dbReference type="InterPro" id="IPR015927">
    <property type="entry name" value="Peptidase_S24_S26A/B/C"/>
</dbReference>
<dbReference type="InterPro" id="IPR036388">
    <property type="entry name" value="WH-like_DNA-bd_sf"/>
</dbReference>
<dbReference type="InterPro" id="IPR036390">
    <property type="entry name" value="WH_DNA-bd_sf"/>
</dbReference>
<dbReference type="NCBIfam" id="TIGR00498">
    <property type="entry name" value="lexA"/>
    <property type="match status" value="1"/>
</dbReference>
<dbReference type="PANTHER" id="PTHR33516">
    <property type="entry name" value="LEXA REPRESSOR"/>
    <property type="match status" value="1"/>
</dbReference>
<dbReference type="PANTHER" id="PTHR33516:SF2">
    <property type="entry name" value="LEXA REPRESSOR-RELATED"/>
    <property type="match status" value="1"/>
</dbReference>
<dbReference type="Pfam" id="PF01726">
    <property type="entry name" value="LexA_DNA_bind"/>
    <property type="match status" value="1"/>
</dbReference>
<dbReference type="Pfam" id="PF00717">
    <property type="entry name" value="Peptidase_S24"/>
    <property type="match status" value="1"/>
</dbReference>
<dbReference type="PRINTS" id="PR00726">
    <property type="entry name" value="LEXASERPTASE"/>
</dbReference>
<dbReference type="SUPFAM" id="SSF51306">
    <property type="entry name" value="LexA/Signal peptidase"/>
    <property type="match status" value="1"/>
</dbReference>
<dbReference type="SUPFAM" id="SSF46785">
    <property type="entry name" value="Winged helix' DNA-binding domain"/>
    <property type="match status" value="1"/>
</dbReference>